<keyword id="KW-0002">3D-structure</keyword>
<keyword id="KW-0106">Calcium</keyword>
<keyword id="KW-0130">Cell adhesion</keyword>
<keyword id="KW-1003">Cell membrane</keyword>
<keyword id="KW-0165">Cleavage on pair of basic residues</keyword>
<keyword id="KW-0903">Direct protein sequencing</keyword>
<keyword id="KW-1015">Disulfide bond</keyword>
<keyword id="KW-0325">Glycoprotein</keyword>
<keyword id="KW-0472">Membrane</keyword>
<keyword id="KW-0479">Metal-binding</keyword>
<keyword id="KW-1185">Reference proteome</keyword>
<keyword id="KW-0677">Repeat</keyword>
<keyword id="KW-0732">Signal</keyword>
<keyword id="KW-0812">Transmembrane</keyword>
<keyword id="KW-1133">Transmembrane helix</keyword>
<feature type="signal peptide" evidence="1">
    <location>
        <begin position="1"/>
        <end position="28"/>
    </location>
</feature>
<feature type="propeptide" id="PRO_0000003725" evidence="1">
    <location>
        <begin position="29"/>
        <end position="155"/>
    </location>
</feature>
<feature type="chain" id="PRO_0000003726" description="EP-cadherin">
    <location>
        <begin position="156"/>
        <end position="880"/>
    </location>
</feature>
<feature type="topological domain" description="Extracellular" evidence="1">
    <location>
        <begin position="156"/>
        <end position="703"/>
    </location>
</feature>
<feature type="transmembrane region" description="Helical" evidence="1">
    <location>
        <begin position="704"/>
        <end position="728"/>
    </location>
</feature>
<feature type="topological domain" description="Cytoplasmic" evidence="1">
    <location>
        <begin position="729"/>
        <end position="880"/>
    </location>
</feature>
<feature type="domain" description="Cadherin 1" evidence="2">
    <location>
        <begin position="156"/>
        <end position="263"/>
    </location>
</feature>
<feature type="domain" description="Cadherin 2" evidence="2">
    <location>
        <begin position="264"/>
        <end position="376"/>
    </location>
</feature>
<feature type="domain" description="Cadherin 3" evidence="2">
    <location>
        <begin position="377"/>
        <end position="487"/>
    </location>
</feature>
<feature type="domain" description="Cadherin 4" evidence="2">
    <location>
        <begin position="488"/>
        <end position="593"/>
    </location>
</feature>
<feature type="domain" description="Cadherin 5" evidence="2">
    <location>
        <begin position="594"/>
        <end position="704"/>
    </location>
</feature>
<feature type="region of interest" description="Disordered" evidence="3">
    <location>
        <begin position="790"/>
        <end position="826"/>
    </location>
</feature>
<feature type="glycosylation site" description="N-linked (GlcNAc...) asparagine" evidence="1">
    <location>
        <position position="61"/>
    </location>
</feature>
<feature type="glycosylation site" description="O-linked (GalNAc...) threonine" evidence="4">
    <location>
        <position position="343"/>
    </location>
</feature>
<feature type="glycosylation site" description="O-linked (GalNAc...) threonine" evidence="4">
    <location>
        <position position="382"/>
    </location>
</feature>
<feature type="glycosylation site" description="O-linked (GalNAc...) threonine" evidence="4">
    <location>
        <position position="400"/>
    </location>
</feature>
<feature type="glycosylation site" description="N-linked (GlcNAc...) asparagine" evidence="4">
    <location>
        <position position="425"/>
    </location>
</feature>
<feature type="glycosylation site" description="O-linked (GalNAc...) threonine" evidence="4">
    <location>
        <position position="428"/>
    </location>
</feature>
<feature type="glycosylation site" description="O-linked (GalNAc...) threonine" evidence="4">
    <location>
        <position position="469"/>
    </location>
</feature>
<feature type="glycosylation site" description="O-linked (GalNAc...) threonine" evidence="4">
    <location>
        <position position="471"/>
    </location>
</feature>
<feature type="glycosylation site" description="O-linked (GalNAc...) threonine" evidence="4">
    <location>
        <position position="473"/>
    </location>
</feature>
<feature type="glycosylation site" description="O-linked (GalNAc...) threonine" evidence="4">
    <location>
        <position position="475"/>
    </location>
</feature>
<feature type="glycosylation site" description="N-linked (GlcNAc...) asparagine" evidence="4">
    <location>
        <position position="558"/>
    </location>
</feature>
<feature type="glycosylation site" description="O-linked (GalNAc...) threonine" evidence="4">
    <location>
        <position position="562"/>
    </location>
</feature>
<feature type="glycosylation site" description="O-linked (GalNAc...) threonine" evidence="4">
    <location>
        <position position="576"/>
    </location>
</feature>
<feature type="glycosylation site" description="O-linked (GalNAc...) threonine" evidence="4">
    <location>
        <position position="578"/>
    </location>
</feature>
<feature type="glycosylation site" description="O-linked (GalNAc...) threonine" evidence="4">
    <location>
        <position position="580"/>
    </location>
</feature>
<feature type="glycosylation site" description="N-linked (GlcNAc...) asparagine" evidence="4">
    <location>
        <position position="681"/>
    </location>
</feature>
<feature type="disulfide bond">
    <location>
        <begin position="603"/>
        <end position="687"/>
    </location>
</feature>
<feature type="disulfide bond">
    <location>
        <begin position="685"/>
        <end position="694"/>
    </location>
</feature>
<feature type="sequence conflict" description="In Ref. 2; AAC16910." evidence="6" ref="2">
    <original>S</original>
    <variation>G</variation>
    <location>
        <position position="3"/>
    </location>
</feature>
<feature type="sequence conflict" description="In Ref. 2; AAC16910." evidence="6" ref="2">
    <original>I</original>
    <variation>N</variation>
    <location>
        <position position="112"/>
    </location>
</feature>
<feature type="sequence conflict" description="In Ref. 4; AA sequence." evidence="6" ref="4">
    <original>K</original>
    <variation>I</variation>
    <location>
        <position position="163"/>
    </location>
</feature>
<feature type="sequence conflict" description="In Ref. 4; AA sequence." evidence="6" ref="4">
    <original>R</original>
    <variation>K</variation>
    <location>
        <position position="169"/>
    </location>
</feature>
<feature type="sequence conflict" description="In Ref. 4; AA sequence." evidence="6" ref="4">
    <original>L</original>
    <variation>I</variation>
    <location>
        <position position="176"/>
    </location>
</feature>
<feature type="sequence conflict" description="In Ref. 2; AAC16910." evidence="6" ref="2">
    <original>S</original>
    <variation>P</variation>
    <location>
        <position position="573"/>
    </location>
</feature>
<feature type="sequence conflict" description="In Ref. 2; AAC16910." evidence="6" ref="2">
    <original>S</original>
    <variation>P</variation>
    <location>
        <position position="864"/>
    </location>
</feature>
<feature type="strand" evidence="7">
    <location>
        <begin position="162"/>
        <end position="167"/>
    </location>
</feature>
<feature type="strand" evidence="7">
    <location>
        <begin position="170"/>
        <end position="172"/>
    </location>
</feature>
<feature type="strand" evidence="7">
    <location>
        <begin position="174"/>
        <end position="178"/>
    </location>
</feature>
<feature type="helix" evidence="7">
    <location>
        <begin position="183"/>
        <end position="185"/>
    </location>
</feature>
<feature type="strand" evidence="7">
    <location>
        <begin position="189"/>
        <end position="196"/>
    </location>
</feature>
<feature type="turn" evidence="7">
    <location>
        <begin position="197"/>
        <end position="199"/>
    </location>
</feature>
<feature type="strand" evidence="7">
    <location>
        <begin position="200"/>
        <end position="202"/>
    </location>
</feature>
<feature type="strand" evidence="7">
    <location>
        <begin position="205"/>
        <end position="208"/>
    </location>
</feature>
<feature type="turn" evidence="7">
    <location>
        <begin position="210"/>
        <end position="212"/>
    </location>
</feature>
<feature type="strand" evidence="7">
    <location>
        <begin position="214"/>
        <end position="217"/>
    </location>
</feature>
<feature type="turn" evidence="7">
    <location>
        <begin position="223"/>
        <end position="225"/>
    </location>
</feature>
<feature type="strand" evidence="7">
    <location>
        <begin position="228"/>
        <end position="240"/>
    </location>
</feature>
<feature type="strand" evidence="7">
    <location>
        <begin position="247"/>
        <end position="254"/>
    </location>
</feature>
<feature type="strand" evidence="7">
    <location>
        <begin position="262"/>
        <end position="266"/>
    </location>
</feature>
<feature type="strand" evidence="7">
    <location>
        <begin position="268"/>
        <end position="273"/>
    </location>
</feature>
<feature type="strand" evidence="7">
    <location>
        <begin position="278"/>
        <end position="284"/>
    </location>
</feature>
<feature type="strand" evidence="7">
    <location>
        <begin position="294"/>
        <end position="297"/>
    </location>
</feature>
<feature type="strand" evidence="7">
    <location>
        <begin position="303"/>
        <end position="310"/>
    </location>
</feature>
<feature type="strand" evidence="7">
    <location>
        <begin position="317"/>
        <end position="320"/>
    </location>
</feature>
<feature type="turn" evidence="7">
    <location>
        <begin position="322"/>
        <end position="324"/>
    </location>
</feature>
<feature type="strand" evidence="7">
    <location>
        <begin position="326"/>
        <end position="329"/>
    </location>
</feature>
<feature type="turn" evidence="7">
    <location>
        <begin position="336"/>
        <end position="338"/>
    </location>
</feature>
<feature type="strand" evidence="7">
    <location>
        <begin position="341"/>
        <end position="349"/>
    </location>
</feature>
<feature type="helix" evidence="7">
    <location>
        <begin position="350"/>
        <end position="353"/>
    </location>
</feature>
<feature type="strand" evidence="7">
    <location>
        <begin position="357"/>
        <end position="359"/>
    </location>
</feature>
<feature type="strand" evidence="7">
    <location>
        <begin position="362"/>
        <end position="367"/>
    </location>
</feature>
<feature type="strand" evidence="7">
    <location>
        <begin position="379"/>
        <end position="389"/>
    </location>
</feature>
<feature type="strand" evidence="7">
    <location>
        <begin position="393"/>
        <end position="397"/>
    </location>
</feature>
<feature type="strand" evidence="7">
    <location>
        <begin position="424"/>
        <end position="428"/>
    </location>
</feature>
<feature type="turn" evidence="7">
    <location>
        <begin position="430"/>
        <end position="432"/>
    </location>
</feature>
<feature type="strand" evidence="7">
    <location>
        <begin position="435"/>
        <end position="441"/>
    </location>
</feature>
<feature type="strand" evidence="7">
    <location>
        <begin position="451"/>
        <end position="455"/>
    </location>
</feature>
<feature type="strand" evidence="7">
    <location>
        <begin position="458"/>
        <end position="461"/>
    </location>
</feature>
<feature type="strand" evidence="7">
    <location>
        <begin position="472"/>
        <end position="479"/>
    </location>
</feature>
<feature type="strand" evidence="7">
    <location>
        <begin position="486"/>
        <end position="489"/>
    </location>
</feature>
<feature type="strand" evidence="7">
    <location>
        <begin position="502"/>
        <end position="508"/>
    </location>
</feature>
<feature type="strand" evidence="7">
    <location>
        <begin position="522"/>
        <end position="526"/>
    </location>
</feature>
<feature type="strand" evidence="7">
    <location>
        <begin position="535"/>
        <end position="537"/>
    </location>
</feature>
<feature type="turn" evidence="7">
    <location>
        <begin position="538"/>
        <end position="541"/>
    </location>
</feature>
<feature type="strand" evidence="7">
    <location>
        <begin position="542"/>
        <end position="545"/>
    </location>
</feature>
<feature type="strand" evidence="7">
    <location>
        <begin position="553"/>
        <end position="555"/>
    </location>
</feature>
<feature type="strand" evidence="7">
    <location>
        <begin position="562"/>
        <end position="569"/>
    </location>
</feature>
<feature type="strand" evidence="7">
    <location>
        <begin position="571"/>
        <end position="573"/>
    </location>
</feature>
<feature type="strand" evidence="7">
    <location>
        <begin position="579"/>
        <end position="582"/>
    </location>
</feature>
<feature type="strand" evidence="7">
    <location>
        <begin position="600"/>
        <end position="602"/>
    </location>
</feature>
<feature type="strand" evidence="7">
    <location>
        <begin position="604"/>
        <end position="606"/>
    </location>
</feature>
<feature type="strand" evidence="7">
    <location>
        <begin position="610"/>
        <end position="614"/>
    </location>
</feature>
<feature type="turn" evidence="7">
    <location>
        <begin position="620"/>
        <end position="623"/>
    </location>
</feature>
<feature type="strand" evidence="7">
    <location>
        <begin position="634"/>
        <end position="637"/>
    </location>
</feature>
<feature type="strand" evidence="7">
    <location>
        <begin position="646"/>
        <end position="652"/>
    </location>
</feature>
<feature type="strand" evidence="7">
    <location>
        <begin position="665"/>
        <end position="667"/>
    </location>
</feature>
<feature type="strand" evidence="7">
    <location>
        <begin position="670"/>
        <end position="672"/>
    </location>
</feature>
<feature type="strand" evidence="7">
    <location>
        <begin position="676"/>
        <end position="679"/>
    </location>
</feature>
<feature type="strand" evidence="7">
    <location>
        <begin position="682"/>
        <end position="684"/>
    </location>
</feature>
<feature type="strand" evidence="7">
    <location>
        <begin position="688"/>
        <end position="690"/>
    </location>
</feature>
<organism>
    <name type="scientific">Xenopus laevis</name>
    <name type="common">African clawed frog</name>
    <dbReference type="NCBI Taxonomy" id="8355"/>
    <lineage>
        <taxon>Eukaryota</taxon>
        <taxon>Metazoa</taxon>
        <taxon>Chordata</taxon>
        <taxon>Craniata</taxon>
        <taxon>Vertebrata</taxon>
        <taxon>Euteleostomi</taxon>
        <taxon>Amphibia</taxon>
        <taxon>Batrachia</taxon>
        <taxon>Anura</taxon>
        <taxon>Pipoidea</taxon>
        <taxon>Pipidae</taxon>
        <taxon>Xenopodinae</taxon>
        <taxon>Xenopus</taxon>
        <taxon>Xenopus</taxon>
    </lineage>
</organism>
<proteinExistence type="evidence at protein level"/>
<name>CADHF_XENLA</name>
<sequence length="880" mass="97651">MGSTRLRNASVWLCGLLCLLQVVPSINADVSGCKPGFSSAEYIFSVNRRELERGRKLGKVNFSDCTTRKHGLYDVGDSRFRVLPDGTVLVKRHVKLHKDTKFTISTWDARGIKHSTNIAVASKRHRSGEEAHSRSSKLPVLTFPETHTGLKRKKRDWVIPPIKVSENERGPFPKRLVQIKSNKDRFNKVYYSITGQGADNPPQGVFRIEWETGWMLVTRPLDREEYDKYVLSSHAVSENGSPVEEPMEITINVIDQNDNRPKFTQDVFRGSVREGVQPGTQVMAVSATDEDDNIDSLNGVLSYSILKQDPEEPIPNLFTINRETGVISLIGTGLDREKFPEYTLTVQATDLEGAGLSVEGKAIIQITDANDNAPIFDPKTYTALVPENEIGFEVQRLSVTDLDMPGTPAWQAVYKIRVNEGGFFNITTDPESNQGILTTAKGLDFELRKQYVLQITVENAEPFSVPLPTSTATVTVTVEDVNEAPFFVPAVSRVDVSEDLSRGEKIISLVAQDPDKQQIQKLSYFIGNDPARWLTVNKDNGIVTGNGNLDRESEYVKNNTYTVIMLVTDDGVSVGTGTGTLILHVLDVNDNGPVPSPRVFTMCDQNPEPQVLTISDADIPPNTYPYKVSLSHGSDLTWKAELDSKGTSMLLSPTQQLKKGDYSIYVLLSDAQNNPQLTVVNATVCSCEGKAIKCQEKLVGGFDLPIILVILGSVLALLILFLLLLLFLKRKKVVKEPLLLPEDDTRDNIFYYGEEGGGEEDQDYDLSQLHRGLDSRPDIMRNDVVPTLMPAPHYRPRPSNPDEIGNFIDENLDAADNDPTAPPYDSLLVFDYEGSGSEAASLSSLNSSNSNDEHDYNYLSDWGSRFRKLADMYGGDDDEE</sequence>
<accession>P33148</accession>
<accession>Q91543</accession>
<reference key="1">
    <citation type="journal article" date="1991" name="Development">
        <title>Expression of a novel cadherin (EP-cadherin) in unfertilized eggs and early Xenopus embryos.</title>
        <authorList>
            <person name="Ginsberg D."/>
            <person name="Desimone D."/>
            <person name="Geiger B."/>
        </authorList>
    </citation>
    <scope>NUCLEOTIDE SEQUENCE [MRNA]</scope>
</reference>
<reference key="2">
    <citation type="thesis" date="1994" institute="University of California San Francisco" country="United States">
        <authorList>
            <person name="Lee C.H."/>
        </authorList>
    </citation>
    <scope>NUCLEOTIDE SEQUENCE [MRNA]</scope>
</reference>
<reference key="3">
    <citation type="submission" date="1998-05" db="EMBL/GenBank/DDBJ databases">
        <authorList>
            <person name="Flament S."/>
        </authorList>
    </citation>
    <scope>SEQUENCE REVISION TO 260</scope>
</reference>
<reference key="4">
    <citation type="journal article" date="1991" name="Development">
        <title>Differential expression of two cadherins in Xenopus laevis.</title>
        <authorList>
            <person name="Angres B."/>
            <person name="Mueller A.H.J."/>
            <person name="Kellermann J."/>
            <person name="Hausen P."/>
        </authorList>
    </citation>
    <scope>PROTEIN SEQUENCE OF 156-176</scope>
</reference>
<reference key="5">
    <citation type="journal article" date="2006" name="Mol. Cell">
        <title>Crystal structure of a beta-catenin/BCL9/Tcf4 complex.</title>
        <authorList>
            <person name="Sampietro J."/>
            <person name="Dahlberg C.L."/>
            <person name="Cho U.S."/>
            <person name="Hinds T.R."/>
            <person name="Kimelman D."/>
            <person name="Xu W."/>
        </authorList>
    </citation>
    <scope>INTERACTION WITH CTNNB1</scope>
</reference>
<reference key="6">
    <citation type="journal article" date="2002" name="Science">
        <title>C-cadherin ectodomain structure and implications for cell adhesion mechanisms.</title>
        <authorList>
            <person name="Boggon T.J."/>
            <person name="Murray J."/>
            <person name="Chappuis-Flament S."/>
            <person name="Wong E."/>
            <person name="Gumbiner B.M."/>
            <person name="Shapiro L."/>
        </authorList>
    </citation>
    <scope>X-RAY CRYSTALLOGRAPHY (3.08 ANGSTROMS) OF 156-695</scope>
    <scope>CALCIUM-BINDING SITES</scope>
    <scope>GLYCOSYLATION AT THR-343; THR-382; THR-400; ASN-425; THR-428; THR-469; THR-471; THR-473; THR-475; ASN-558; THR-562; THR-576; THR-578; THR-580 AND ASN-681</scope>
</reference>
<reference key="7">
    <citation type="journal article" date="2003" name="Science">
        <title>Untangling desmosomal knots with electron tomography.</title>
        <authorList>
            <person name="He W."/>
            <person name="Cowin P."/>
            <person name="Stokes D.L."/>
        </authorList>
    </citation>
    <scope>X-RAY CRYSTALLOGRAPHY (3.08 ANGSTROMS) OF 156-695</scope>
</reference>
<dbReference type="EMBL" id="X63720">
    <property type="protein sequence ID" value="CAA45252.1"/>
    <property type="status" value="ALT_INIT"/>
    <property type="molecule type" value="mRNA"/>
</dbReference>
<dbReference type="EMBL" id="U04707">
    <property type="protein sequence ID" value="AAC16910.1"/>
    <property type="molecule type" value="mRNA"/>
</dbReference>
<dbReference type="PIR" id="B43785">
    <property type="entry name" value="IJXLCP"/>
</dbReference>
<dbReference type="RefSeq" id="NP_001080946.1">
    <property type="nucleotide sequence ID" value="NM_001087477.1"/>
</dbReference>
<dbReference type="PDB" id="1L3W">
    <property type="method" value="X-ray"/>
    <property type="resolution" value="3.08 A"/>
    <property type="chains" value="A=156-695"/>
</dbReference>
<dbReference type="PDBsum" id="1L3W"/>
<dbReference type="SMR" id="P33148"/>
<dbReference type="DIP" id="DIP-59585N"/>
<dbReference type="IntAct" id="P33148">
    <property type="interactions" value="4"/>
</dbReference>
<dbReference type="iPTMnet" id="P33148"/>
<dbReference type="GeneID" id="394290"/>
<dbReference type="KEGG" id="xla:394290"/>
<dbReference type="AGR" id="Xenbase:XB-GENE-6254663"/>
<dbReference type="CTD" id="394290"/>
<dbReference type="Xenbase" id="XB-GENE-6254663">
    <property type="gene designation" value="cdh3.S"/>
</dbReference>
<dbReference type="OrthoDB" id="6079678at2759"/>
<dbReference type="EvolutionaryTrace" id="P33148"/>
<dbReference type="Proteomes" id="UP000186698">
    <property type="component" value="Chromosome 4S"/>
</dbReference>
<dbReference type="Bgee" id="394290">
    <property type="expression patterns" value="Expressed in blastula and 16 other cell types or tissues"/>
</dbReference>
<dbReference type="GO" id="GO:0005912">
    <property type="term" value="C:adherens junction"/>
    <property type="evidence" value="ECO:0000318"/>
    <property type="project" value="GO_Central"/>
</dbReference>
<dbReference type="GO" id="GO:0016342">
    <property type="term" value="C:catenin complex"/>
    <property type="evidence" value="ECO:0000318"/>
    <property type="project" value="GO_Central"/>
</dbReference>
<dbReference type="GO" id="GO:0005737">
    <property type="term" value="C:cytoplasm"/>
    <property type="evidence" value="ECO:0000318"/>
    <property type="project" value="GO_Central"/>
</dbReference>
<dbReference type="GO" id="GO:0008013">
    <property type="term" value="F:beta-catenin binding"/>
    <property type="evidence" value="ECO:0000318"/>
    <property type="project" value="GO_Central"/>
</dbReference>
<dbReference type="GO" id="GO:0045296">
    <property type="term" value="F:cadherin binding"/>
    <property type="evidence" value="ECO:0000318"/>
    <property type="project" value="GO_Central"/>
</dbReference>
<dbReference type="GO" id="GO:0005509">
    <property type="term" value="F:calcium ion binding"/>
    <property type="evidence" value="ECO:0007669"/>
    <property type="project" value="InterPro"/>
</dbReference>
<dbReference type="GO" id="GO:0034332">
    <property type="term" value="P:adherens junction organization"/>
    <property type="evidence" value="ECO:0000318"/>
    <property type="project" value="GO_Central"/>
</dbReference>
<dbReference type="GO" id="GO:0016339">
    <property type="term" value="P:calcium-dependent cell-cell adhesion via plasma membrane cell adhesion molecules"/>
    <property type="evidence" value="ECO:0000318"/>
    <property type="project" value="GO_Central"/>
</dbReference>
<dbReference type="GO" id="GO:0016477">
    <property type="term" value="P:cell migration"/>
    <property type="evidence" value="ECO:0000318"/>
    <property type="project" value="GO_Central"/>
</dbReference>
<dbReference type="GO" id="GO:0000902">
    <property type="term" value="P:cell morphogenesis"/>
    <property type="evidence" value="ECO:0000318"/>
    <property type="project" value="GO_Central"/>
</dbReference>
<dbReference type="GO" id="GO:0044331">
    <property type="term" value="P:cell-cell adhesion mediated by cadherin"/>
    <property type="evidence" value="ECO:0000318"/>
    <property type="project" value="GO_Central"/>
</dbReference>
<dbReference type="GO" id="GO:0007043">
    <property type="term" value="P:cell-cell junction assembly"/>
    <property type="evidence" value="ECO:0000318"/>
    <property type="project" value="GO_Central"/>
</dbReference>
<dbReference type="GO" id="GO:0007156">
    <property type="term" value="P:homophilic cell adhesion via plasma membrane adhesion molecules"/>
    <property type="evidence" value="ECO:0007669"/>
    <property type="project" value="InterPro"/>
</dbReference>
<dbReference type="CDD" id="cd11304">
    <property type="entry name" value="Cadherin_repeat"/>
    <property type="match status" value="3"/>
</dbReference>
<dbReference type="FunFam" id="2.60.40.60:FF:000011">
    <property type="entry name" value="Cadherin 1"/>
    <property type="match status" value="1"/>
</dbReference>
<dbReference type="FunFam" id="2.60.40.60:FF:000191">
    <property type="entry name" value="Cadherin 1"/>
    <property type="match status" value="1"/>
</dbReference>
<dbReference type="FunFam" id="2.60.40.60:FF:000019">
    <property type="entry name" value="Cadherin 2"/>
    <property type="match status" value="1"/>
</dbReference>
<dbReference type="FunFam" id="2.60.40.60:FF:000022">
    <property type="entry name" value="Cadherin 2"/>
    <property type="match status" value="1"/>
</dbReference>
<dbReference type="FunFam" id="2.60.40.60:FF:000027">
    <property type="entry name" value="Cadherin 2"/>
    <property type="match status" value="1"/>
</dbReference>
<dbReference type="FunFam" id="4.10.900.10:FF:000001">
    <property type="entry name" value="Cadherin 2"/>
    <property type="match status" value="1"/>
</dbReference>
<dbReference type="FunFam" id="2.60.40.60:FF:000031">
    <property type="entry name" value="Cadherin 3"/>
    <property type="match status" value="1"/>
</dbReference>
<dbReference type="Gene3D" id="2.60.40.60">
    <property type="entry name" value="Cadherins"/>
    <property type="match status" value="6"/>
</dbReference>
<dbReference type="Gene3D" id="4.10.900.10">
    <property type="entry name" value="TCF3-CBD (Catenin binding domain)"/>
    <property type="match status" value="1"/>
</dbReference>
<dbReference type="InterPro" id="IPR039808">
    <property type="entry name" value="Cadherin"/>
</dbReference>
<dbReference type="InterPro" id="IPR002126">
    <property type="entry name" value="Cadherin-like_dom"/>
</dbReference>
<dbReference type="InterPro" id="IPR015919">
    <property type="entry name" value="Cadherin-like_sf"/>
</dbReference>
<dbReference type="InterPro" id="IPR020894">
    <property type="entry name" value="Cadherin_CS"/>
</dbReference>
<dbReference type="InterPro" id="IPR014868">
    <property type="entry name" value="Cadherin_pro_dom"/>
</dbReference>
<dbReference type="InterPro" id="IPR000233">
    <property type="entry name" value="Cadherin_Y-type_LIR"/>
</dbReference>
<dbReference type="InterPro" id="IPR027397">
    <property type="entry name" value="Catenin-bd_sf"/>
</dbReference>
<dbReference type="PANTHER" id="PTHR24027:SF444">
    <property type="entry name" value="BLASTOMERE CADHERIN"/>
    <property type="match status" value="1"/>
</dbReference>
<dbReference type="PANTHER" id="PTHR24027">
    <property type="entry name" value="CADHERIN-23"/>
    <property type="match status" value="1"/>
</dbReference>
<dbReference type="Pfam" id="PF01049">
    <property type="entry name" value="CADH_Y-type_LIR"/>
    <property type="match status" value="1"/>
</dbReference>
<dbReference type="Pfam" id="PF00028">
    <property type="entry name" value="Cadherin"/>
    <property type="match status" value="4"/>
</dbReference>
<dbReference type="Pfam" id="PF08758">
    <property type="entry name" value="Cadherin_pro"/>
    <property type="match status" value="1"/>
</dbReference>
<dbReference type="PRINTS" id="PR00205">
    <property type="entry name" value="CADHERIN"/>
</dbReference>
<dbReference type="SMART" id="SM00112">
    <property type="entry name" value="CA"/>
    <property type="match status" value="4"/>
</dbReference>
<dbReference type="SMART" id="SM01055">
    <property type="entry name" value="Cadherin_pro"/>
    <property type="match status" value="1"/>
</dbReference>
<dbReference type="SUPFAM" id="SSF49313">
    <property type="entry name" value="Cadherin-like"/>
    <property type="match status" value="6"/>
</dbReference>
<dbReference type="PROSITE" id="PS00232">
    <property type="entry name" value="CADHERIN_1"/>
    <property type="match status" value="3"/>
</dbReference>
<dbReference type="PROSITE" id="PS50268">
    <property type="entry name" value="CADHERIN_2"/>
    <property type="match status" value="4"/>
</dbReference>
<protein>
    <recommendedName>
        <fullName>EP-cadherin</fullName>
    </recommendedName>
    <alternativeName>
        <fullName>C-cadherin</fullName>
    </alternativeName>
</protein>
<evidence type="ECO:0000255" key="1"/>
<evidence type="ECO:0000255" key="2">
    <source>
        <dbReference type="PROSITE-ProRule" id="PRU00043"/>
    </source>
</evidence>
<evidence type="ECO:0000256" key="3">
    <source>
        <dbReference type="SAM" id="MobiDB-lite"/>
    </source>
</evidence>
<evidence type="ECO:0000269" key="4">
    <source>
    </source>
</evidence>
<evidence type="ECO:0000269" key="5">
    <source>
    </source>
</evidence>
<evidence type="ECO:0000305" key="6"/>
<evidence type="ECO:0007829" key="7">
    <source>
        <dbReference type="PDB" id="1L3W"/>
    </source>
</evidence>
<comment type="function">
    <text>Cadherins are calcium-dependent cell adhesion proteins. They preferentially interact with themselves in a homophilic manner in connecting cells; cadherins may thus contribute to the sorting of heterogeneous cell types.</text>
</comment>
<comment type="subunit">
    <text evidence="5">Interacts with CTNNB1.</text>
</comment>
<comment type="interaction">
    <interactant intactId="EBI-15603953">
        <id>P33148</id>
    </interactant>
    <interactant intactId="EBI-397872">
        <id>Q02248</id>
        <label>Ctnnb1</label>
    </interactant>
    <organismsDiffer>true</organismsDiffer>
    <experiments>4</experiments>
</comment>
<comment type="interaction">
    <interactant intactId="EBI-15603953">
        <id>P33148</id>
    </interactant>
    <interactant intactId="EBI-876224">
        <id>Q23993</id>
        <label>nmo</label>
    </interactant>
    <organismsDiffer>true</organismsDiffer>
    <experiments>4</experiments>
</comment>
<comment type="subcellular location">
    <subcellularLocation>
        <location>Cell membrane</location>
        <topology>Single-pass type I membrane protein</topology>
    </subcellularLocation>
</comment>
<comment type="developmental stage">
    <text>Unfertilized eggs and early Xenopus embryos.</text>
</comment>
<comment type="domain">
    <text>Three calcium ions are usually bound at the interface of each cadherin domain.</text>
</comment>
<comment type="sequence caution" evidence="6">
    <conflict type="erroneous initiation">
        <sequence resource="EMBL-CDS" id="CAA45252"/>
    </conflict>
    <text>Extended N-terminus.</text>
</comment>